<feature type="chain" id="PRO_0000170142" description="Large ribosomal subunit protein bL33">
    <location>
        <begin position="1"/>
        <end position="55"/>
    </location>
</feature>
<organism>
    <name type="scientific">Brucella melitensis biotype 1 (strain ATCC 23456 / CCUG 17765 / NCTC 10094 / 16M)</name>
    <dbReference type="NCBI Taxonomy" id="224914"/>
    <lineage>
        <taxon>Bacteria</taxon>
        <taxon>Pseudomonadati</taxon>
        <taxon>Pseudomonadota</taxon>
        <taxon>Alphaproteobacteria</taxon>
        <taxon>Hyphomicrobiales</taxon>
        <taxon>Brucellaceae</taxon>
        <taxon>Brucella/Ochrobactrum group</taxon>
        <taxon>Brucella</taxon>
    </lineage>
</organism>
<protein>
    <recommendedName>
        <fullName evidence="1">Large ribosomal subunit protein bL33</fullName>
    </recommendedName>
    <alternativeName>
        <fullName evidence="2">50S ribosomal protein L33</fullName>
    </alternativeName>
</protein>
<dbReference type="EMBL" id="AE008918">
    <property type="protein sequence ID" value="AAL53903.1"/>
    <property type="molecule type" value="Genomic_DNA"/>
</dbReference>
<dbReference type="PIR" id="AD3592">
    <property type="entry name" value="AD3592"/>
</dbReference>
<dbReference type="RefSeq" id="WP_002966024.1">
    <property type="nucleotide sequence ID" value="NZ_GG703779.1"/>
</dbReference>
<dbReference type="SMR" id="P66215"/>
<dbReference type="GeneID" id="97535268"/>
<dbReference type="KEGG" id="bme:BMEII0661"/>
<dbReference type="KEGG" id="bmel:DK63_2584"/>
<dbReference type="PATRIC" id="fig|224914.52.peg.2708"/>
<dbReference type="eggNOG" id="COG0267">
    <property type="taxonomic scope" value="Bacteria"/>
</dbReference>
<dbReference type="Proteomes" id="UP000000419">
    <property type="component" value="Chromosome II"/>
</dbReference>
<dbReference type="GO" id="GO:0022625">
    <property type="term" value="C:cytosolic large ribosomal subunit"/>
    <property type="evidence" value="ECO:0007669"/>
    <property type="project" value="TreeGrafter"/>
</dbReference>
<dbReference type="GO" id="GO:0003735">
    <property type="term" value="F:structural constituent of ribosome"/>
    <property type="evidence" value="ECO:0007669"/>
    <property type="project" value="InterPro"/>
</dbReference>
<dbReference type="GO" id="GO:0006412">
    <property type="term" value="P:translation"/>
    <property type="evidence" value="ECO:0007669"/>
    <property type="project" value="UniProtKB-UniRule"/>
</dbReference>
<dbReference type="Gene3D" id="2.20.28.120">
    <property type="entry name" value="Ribosomal protein L33"/>
    <property type="match status" value="1"/>
</dbReference>
<dbReference type="HAMAP" id="MF_00294">
    <property type="entry name" value="Ribosomal_bL33"/>
    <property type="match status" value="1"/>
</dbReference>
<dbReference type="InterPro" id="IPR001705">
    <property type="entry name" value="Ribosomal_bL33"/>
</dbReference>
<dbReference type="InterPro" id="IPR018264">
    <property type="entry name" value="Ribosomal_bL33_CS"/>
</dbReference>
<dbReference type="InterPro" id="IPR038584">
    <property type="entry name" value="Ribosomal_bL33_sf"/>
</dbReference>
<dbReference type="InterPro" id="IPR011332">
    <property type="entry name" value="Ribosomal_zn-bd"/>
</dbReference>
<dbReference type="NCBIfam" id="NF001860">
    <property type="entry name" value="PRK00595.1"/>
    <property type="match status" value="1"/>
</dbReference>
<dbReference type="NCBIfam" id="TIGR01023">
    <property type="entry name" value="rpmG_bact"/>
    <property type="match status" value="1"/>
</dbReference>
<dbReference type="PANTHER" id="PTHR15238">
    <property type="entry name" value="54S RIBOSOMAL PROTEIN L39, MITOCHONDRIAL"/>
    <property type="match status" value="1"/>
</dbReference>
<dbReference type="PANTHER" id="PTHR15238:SF1">
    <property type="entry name" value="LARGE RIBOSOMAL SUBUNIT PROTEIN BL33M"/>
    <property type="match status" value="1"/>
</dbReference>
<dbReference type="Pfam" id="PF00471">
    <property type="entry name" value="Ribosomal_L33"/>
    <property type="match status" value="1"/>
</dbReference>
<dbReference type="SUPFAM" id="SSF57829">
    <property type="entry name" value="Zn-binding ribosomal proteins"/>
    <property type="match status" value="1"/>
</dbReference>
<dbReference type="PROSITE" id="PS00582">
    <property type="entry name" value="RIBOSOMAL_L33"/>
    <property type="match status" value="1"/>
</dbReference>
<comment type="similarity">
    <text evidence="1">Belongs to the bacterial ribosomal protein bL33 family.</text>
</comment>
<name>RL33_BRUME</name>
<evidence type="ECO:0000255" key="1">
    <source>
        <dbReference type="HAMAP-Rule" id="MF_00294"/>
    </source>
</evidence>
<evidence type="ECO:0000305" key="2"/>
<proteinExistence type="inferred from homology"/>
<reference key="1">
    <citation type="journal article" date="2002" name="Proc. Natl. Acad. Sci. U.S.A.">
        <title>The genome sequence of the facultative intracellular pathogen Brucella melitensis.</title>
        <authorList>
            <person name="DelVecchio V.G."/>
            <person name="Kapatral V."/>
            <person name="Redkar R.J."/>
            <person name="Patra G."/>
            <person name="Mujer C."/>
            <person name="Los T."/>
            <person name="Ivanova N."/>
            <person name="Anderson I."/>
            <person name="Bhattacharyya A."/>
            <person name="Lykidis A."/>
            <person name="Reznik G."/>
            <person name="Jablonski L."/>
            <person name="Larsen N."/>
            <person name="D'Souza M."/>
            <person name="Bernal A."/>
            <person name="Mazur M."/>
            <person name="Goltsman E."/>
            <person name="Selkov E."/>
            <person name="Elzer P.H."/>
            <person name="Hagius S."/>
            <person name="O'Callaghan D."/>
            <person name="Letesson J.-J."/>
            <person name="Haselkorn R."/>
            <person name="Kyrpides N.C."/>
            <person name="Overbeek R."/>
        </authorList>
    </citation>
    <scope>NUCLEOTIDE SEQUENCE [LARGE SCALE GENOMIC DNA]</scope>
    <source>
        <strain>ATCC 23456 / CCUG 17765 / NCTC 10094 / 16M</strain>
    </source>
</reference>
<sequence length="55" mass="6400">MAKATTIKIKLLSTADTGFFYVTKKNSRTMTEKMTKTKYDPIARKHVEFKETKIK</sequence>
<gene>
    <name evidence="1" type="primary">rpmG</name>
    <name type="ordered locus">BMEII0661</name>
</gene>
<keyword id="KW-0687">Ribonucleoprotein</keyword>
<keyword id="KW-0689">Ribosomal protein</keyword>
<accession>P66215</accession>
<accession>Q8YC71</accession>